<dbReference type="EMBL" id="CH954177">
    <property type="protein sequence ID" value="EDV58286.1"/>
    <property type="molecule type" value="Genomic_DNA"/>
</dbReference>
<dbReference type="SMR" id="B3N7D5"/>
<dbReference type="EnsemblMetazoa" id="FBtr0407099">
    <property type="protein sequence ID" value="FBpp0365654"/>
    <property type="gene ID" value="FBgn0116196"/>
</dbReference>
<dbReference type="EnsemblMetazoa" id="XM_001969191.3">
    <property type="protein sequence ID" value="XP_001969227.1"/>
    <property type="gene ID" value="LOC6542893"/>
</dbReference>
<dbReference type="GeneID" id="6542893"/>
<dbReference type="KEGG" id="der:6542893"/>
<dbReference type="eggNOG" id="KOG4038">
    <property type="taxonomic scope" value="Eukaryota"/>
</dbReference>
<dbReference type="HOGENOM" id="CLU_119682_0_0_1"/>
<dbReference type="OMA" id="STNTWQN"/>
<dbReference type="OrthoDB" id="10248777at2759"/>
<dbReference type="PhylomeDB" id="B3N7D5"/>
<dbReference type="Proteomes" id="UP000008711">
    <property type="component" value="Unassembled WGS sequence"/>
</dbReference>
<dbReference type="GO" id="GO:0005737">
    <property type="term" value="C:cytoplasm"/>
    <property type="evidence" value="ECO:0000250"/>
    <property type="project" value="UniProtKB"/>
</dbReference>
<dbReference type="GO" id="GO:0005634">
    <property type="term" value="C:nucleus"/>
    <property type="evidence" value="ECO:0000250"/>
    <property type="project" value="UniProtKB"/>
</dbReference>
<dbReference type="GO" id="GO:0050953">
    <property type="term" value="P:sensory perception of light stimulus"/>
    <property type="evidence" value="ECO:0007669"/>
    <property type="project" value="InterPro"/>
</dbReference>
<dbReference type="FunFam" id="2.70.50.40:FF:000002">
    <property type="entry name" value="Retinal rod rhodopsin-sensitive cGMP 3',5'-cyclic phosphodiesterase subunit delta"/>
    <property type="match status" value="1"/>
</dbReference>
<dbReference type="Gene3D" id="2.70.50.40">
    <property type="entry name" value="GMP phosphodiesterase, delta subunit"/>
    <property type="match status" value="1"/>
</dbReference>
<dbReference type="InterPro" id="IPR014756">
    <property type="entry name" value="Ig_E-set"/>
</dbReference>
<dbReference type="InterPro" id="IPR008015">
    <property type="entry name" value="PDED_dom"/>
</dbReference>
<dbReference type="InterPro" id="IPR037036">
    <property type="entry name" value="PDED_dom_sf"/>
</dbReference>
<dbReference type="InterPro" id="IPR017287">
    <property type="entry name" value="Rhodop-sen_GMP-Pdiesterase_dsu"/>
</dbReference>
<dbReference type="PANTHER" id="PTHR12976">
    <property type="entry name" value="RETINAL ROD RHODOPSIN-SENSITIVE CGMP 3',5'-CYCLIC PHOSPHODIESTERASE DELTA-SUBUNIT"/>
    <property type="match status" value="1"/>
</dbReference>
<dbReference type="PANTHER" id="PTHR12976:SF0">
    <property type="entry name" value="RETINAL ROD RHODOPSIN-SENSITIVE CGMP 3',5'-CYCLIC PHOSPHODIESTERASE SUBUNIT DELTA"/>
    <property type="match status" value="1"/>
</dbReference>
<dbReference type="Pfam" id="PF05351">
    <property type="entry name" value="GMP_PDE_delta"/>
    <property type="match status" value="1"/>
</dbReference>
<dbReference type="PIRSF" id="PIRSF037825">
    <property type="entry name" value="GMP-Pdiesterase_delta"/>
    <property type="match status" value="1"/>
</dbReference>
<dbReference type="SUPFAM" id="SSF81296">
    <property type="entry name" value="E set domains"/>
    <property type="match status" value="1"/>
</dbReference>
<accession>B3N7D5</accession>
<gene>
    <name evidence="1" type="primary">PrBP</name>
    <name type="ORF">GG24057</name>
</gene>
<sequence length="151" mass="17418">MGSDDQSAGDRIQKGFQINYMILRDADSGKIIWQENKDFSAPDQEHEARVPVKILEMRAVSREINFSTIESMENFRLDQKVLFKGRIMEEWFFEMGFVGANTTNTWQSTIEAAPESQMMPAKVLNGNVTIQTSFYDNETLITKSVVRLYYI</sequence>
<protein>
    <recommendedName>
        <fullName>Probable cGMP 3',5'-cyclic phosphodiesterase subunit delta</fullName>
    </recommendedName>
</protein>
<comment type="subunit">
    <text evidence="1">Interacts with Pde6.</text>
</comment>
<comment type="subcellular location">
    <subcellularLocation>
        <location evidence="1">Nucleus</location>
    </subcellularLocation>
    <subcellularLocation>
        <location evidence="1">Cytoplasm</location>
    </subcellularLocation>
</comment>
<comment type="similarity">
    <text evidence="2">Belongs to the PDE6D/unc-119 family.</text>
</comment>
<evidence type="ECO:0000250" key="1">
    <source>
        <dbReference type="UniProtKB" id="Q9VLJ0"/>
    </source>
</evidence>
<evidence type="ECO:0000255" key="2"/>
<evidence type="ECO:0000312" key="3">
    <source>
        <dbReference type="EMBL" id="EDV58286.1"/>
    </source>
</evidence>
<feature type="chain" id="PRO_0000363674" description="Probable cGMP 3',5'-cyclic phosphodiesterase subunit delta">
    <location>
        <begin position="1"/>
        <end position="151"/>
    </location>
</feature>
<name>PDE6D_DROER</name>
<proteinExistence type="inferred from homology"/>
<organism>
    <name type="scientific">Drosophila erecta</name>
    <name type="common">Fruit fly</name>
    <dbReference type="NCBI Taxonomy" id="7220"/>
    <lineage>
        <taxon>Eukaryota</taxon>
        <taxon>Metazoa</taxon>
        <taxon>Ecdysozoa</taxon>
        <taxon>Arthropoda</taxon>
        <taxon>Hexapoda</taxon>
        <taxon>Insecta</taxon>
        <taxon>Pterygota</taxon>
        <taxon>Neoptera</taxon>
        <taxon>Endopterygota</taxon>
        <taxon>Diptera</taxon>
        <taxon>Brachycera</taxon>
        <taxon>Muscomorpha</taxon>
        <taxon>Ephydroidea</taxon>
        <taxon>Drosophilidae</taxon>
        <taxon>Drosophila</taxon>
        <taxon>Sophophora</taxon>
    </lineage>
</organism>
<reference evidence="3" key="1">
    <citation type="journal article" date="2007" name="Nature">
        <title>Evolution of genes and genomes on the Drosophila phylogeny.</title>
        <authorList>
            <consortium name="Drosophila 12 genomes consortium"/>
        </authorList>
    </citation>
    <scope>NUCLEOTIDE SEQUENCE [LARGE SCALE GENOMIC DNA]</scope>
    <source>
        <strain evidence="3">Tucson 14021-0224.01</strain>
    </source>
</reference>
<keyword id="KW-0140">cGMP</keyword>
<keyword id="KW-0963">Cytoplasm</keyword>
<keyword id="KW-0539">Nucleus</keyword>